<evidence type="ECO:0000255" key="1">
    <source>
        <dbReference type="HAMAP-Rule" id="MF_00503"/>
    </source>
</evidence>
<evidence type="ECO:0000305" key="2"/>
<feature type="chain" id="PRO_0000258468" description="Large ribosomal subunit protein bL9">
    <location>
        <begin position="1"/>
        <end position="145"/>
    </location>
</feature>
<accession>Q5ZZP2</accession>
<keyword id="KW-0687">Ribonucleoprotein</keyword>
<keyword id="KW-0689">Ribosomal protein</keyword>
<keyword id="KW-0694">RNA-binding</keyword>
<keyword id="KW-0699">rRNA-binding</keyword>
<gene>
    <name evidence="1" type="primary">rplI</name>
    <name type="ordered locus">mhp665</name>
</gene>
<comment type="function">
    <text evidence="1">Binds to the 23S rRNA.</text>
</comment>
<comment type="similarity">
    <text evidence="1">Belongs to the bacterial ribosomal protein bL9 family.</text>
</comment>
<name>RL9_MESH2</name>
<dbReference type="EMBL" id="AE017332">
    <property type="protein sequence ID" value="AAV28020.1"/>
    <property type="molecule type" value="Genomic_DNA"/>
</dbReference>
<dbReference type="RefSeq" id="WP_011206496.1">
    <property type="nucleotide sequence ID" value="NC_006360.1"/>
</dbReference>
<dbReference type="SMR" id="Q5ZZP2"/>
<dbReference type="KEGG" id="mhy:mhp665"/>
<dbReference type="eggNOG" id="COG0359">
    <property type="taxonomic scope" value="Bacteria"/>
</dbReference>
<dbReference type="HOGENOM" id="CLU_078938_3_1_14"/>
<dbReference type="PhylomeDB" id="Q5ZZP2"/>
<dbReference type="Proteomes" id="UP000006822">
    <property type="component" value="Chromosome"/>
</dbReference>
<dbReference type="GO" id="GO:1990904">
    <property type="term" value="C:ribonucleoprotein complex"/>
    <property type="evidence" value="ECO:0007669"/>
    <property type="project" value="UniProtKB-KW"/>
</dbReference>
<dbReference type="GO" id="GO:0005840">
    <property type="term" value="C:ribosome"/>
    <property type="evidence" value="ECO:0007669"/>
    <property type="project" value="UniProtKB-KW"/>
</dbReference>
<dbReference type="GO" id="GO:0019843">
    <property type="term" value="F:rRNA binding"/>
    <property type="evidence" value="ECO:0007669"/>
    <property type="project" value="UniProtKB-UniRule"/>
</dbReference>
<dbReference type="GO" id="GO:0003735">
    <property type="term" value="F:structural constituent of ribosome"/>
    <property type="evidence" value="ECO:0007669"/>
    <property type="project" value="InterPro"/>
</dbReference>
<dbReference type="GO" id="GO:0006412">
    <property type="term" value="P:translation"/>
    <property type="evidence" value="ECO:0007669"/>
    <property type="project" value="UniProtKB-UniRule"/>
</dbReference>
<dbReference type="Gene3D" id="3.10.430.100">
    <property type="entry name" value="Ribosomal protein L9, C-terminal domain"/>
    <property type="match status" value="1"/>
</dbReference>
<dbReference type="Gene3D" id="3.40.5.10">
    <property type="entry name" value="Ribosomal protein L9, N-terminal domain"/>
    <property type="match status" value="1"/>
</dbReference>
<dbReference type="HAMAP" id="MF_00503">
    <property type="entry name" value="Ribosomal_bL9"/>
    <property type="match status" value="1"/>
</dbReference>
<dbReference type="InterPro" id="IPR000244">
    <property type="entry name" value="Ribosomal_bL9"/>
</dbReference>
<dbReference type="InterPro" id="IPR009027">
    <property type="entry name" value="Ribosomal_bL9/RNase_H1_N"/>
</dbReference>
<dbReference type="InterPro" id="IPR020594">
    <property type="entry name" value="Ribosomal_bL9_bac/chp"/>
</dbReference>
<dbReference type="InterPro" id="IPR020069">
    <property type="entry name" value="Ribosomal_bL9_C"/>
</dbReference>
<dbReference type="InterPro" id="IPR036791">
    <property type="entry name" value="Ribosomal_bL9_C_sf"/>
</dbReference>
<dbReference type="InterPro" id="IPR020070">
    <property type="entry name" value="Ribosomal_bL9_N"/>
</dbReference>
<dbReference type="InterPro" id="IPR036935">
    <property type="entry name" value="Ribosomal_bL9_N_sf"/>
</dbReference>
<dbReference type="NCBIfam" id="TIGR00158">
    <property type="entry name" value="L9"/>
    <property type="match status" value="1"/>
</dbReference>
<dbReference type="PANTHER" id="PTHR21368">
    <property type="entry name" value="50S RIBOSOMAL PROTEIN L9"/>
    <property type="match status" value="1"/>
</dbReference>
<dbReference type="Pfam" id="PF03948">
    <property type="entry name" value="Ribosomal_L9_C"/>
    <property type="match status" value="1"/>
</dbReference>
<dbReference type="Pfam" id="PF01281">
    <property type="entry name" value="Ribosomal_L9_N"/>
    <property type="match status" value="1"/>
</dbReference>
<dbReference type="SUPFAM" id="SSF55658">
    <property type="entry name" value="L9 N-domain-like"/>
    <property type="match status" value="1"/>
</dbReference>
<dbReference type="SUPFAM" id="SSF55653">
    <property type="entry name" value="Ribosomal protein L9 C-domain"/>
    <property type="match status" value="1"/>
</dbReference>
<dbReference type="PROSITE" id="PS00651">
    <property type="entry name" value="RIBOSOMAL_L9"/>
    <property type="match status" value="1"/>
</dbReference>
<organism>
    <name type="scientific">Mesomycoplasma hyopneumoniae (strain 232)</name>
    <name type="common">Mycoplasma hyopneumoniae</name>
    <dbReference type="NCBI Taxonomy" id="295358"/>
    <lineage>
        <taxon>Bacteria</taxon>
        <taxon>Bacillati</taxon>
        <taxon>Mycoplasmatota</taxon>
        <taxon>Mycoplasmoidales</taxon>
        <taxon>Metamycoplasmataceae</taxon>
        <taxon>Mesomycoplasma</taxon>
    </lineage>
</organism>
<protein>
    <recommendedName>
        <fullName evidence="1">Large ribosomal subunit protein bL9</fullName>
    </recommendedName>
    <alternativeName>
        <fullName evidence="2">50S ribosomal protein L9</fullName>
    </alternativeName>
</protein>
<reference key="1">
    <citation type="journal article" date="2004" name="J. Bacteriol.">
        <title>The genome sequence of Mycoplasma hyopneumoniae strain 232, the agent of swine mycoplasmosis.</title>
        <authorList>
            <person name="Minion F.C."/>
            <person name="Lefkowitz E.J."/>
            <person name="Madsen M.L."/>
            <person name="Cleary B.J."/>
            <person name="Swartzell S.M."/>
            <person name="Mahairas G.G."/>
        </authorList>
    </citation>
    <scope>NUCLEOTIDE SEQUENCE [LARGE SCALE GENOMIC DNA]</scope>
    <source>
        <strain>232</strain>
    </source>
</reference>
<sequence length="145" mass="16454">MKVILIKDTKDGKANTIIDVSPGYATNFLFKNKLAEPLNSRTEKLLVKRKQQIEIEKQEKQEQIAKLKIEIERLVLWFKLKGNKESVHGAITAKKIKKELEIKGIFVDKQAIQTSGISTFGTSFVDIKLSSQTIAKLKINITKDE</sequence>
<proteinExistence type="inferred from homology"/>